<protein>
    <recommendedName>
        <fullName evidence="1">Tryptophan synthase beta chain</fullName>
        <ecNumber evidence="1">4.2.1.20</ecNumber>
    </recommendedName>
</protein>
<gene>
    <name evidence="1" type="primary">trpB</name>
    <name type="ordered locus">NMA0904</name>
</gene>
<dbReference type="EC" id="4.2.1.20" evidence="1"/>
<dbReference type="EMBL" id="AL157959">
    <property type="protein sequence ID" value="CAM08136.1"/>
    <property type="molecule type" value="Genomic_DNA"/>
</dbReference>
<dbReference type="PIR" id="H81936">
    <property type="entry name" value="H81936"/>
</dbReference>
<dbReference type="RefSeq" id="WP_002221262.1">
    <property type="nucleotide sequence ID" value="NC_003116.1"/>
</dbReference>
<dbReference type="SMR" id="Q9JVC0"/>
<dbReference type="EnsemblBacteria" id="CAM08136">
    <property type="protein sequence ID" value="CAM08136"/>
    <property type="gene ID" value="NMA0904"/>
</dbReference>
<dbReference type="KEGG" id="nma:NMA0904"/>
<dbReference type="HOGENOM" id="CLU_016734_3_1_4"/>
<dbReference type="UniPathway" id="UPA00035">
    <property type="reaction ID" value="UER00044"/>
</dbReference>
<dbReference type="Proteomes" id="UP000000626">
    <property type="component" value="Chromosome"/>
</dbReference>
<dbReference type="GO" id="GO:0005737">
    <property type="term" value="C:cytoplasm"/>
    <property type="evidence" value="ECO:0007669"/>
    <property type="project" value="TreeGrafter"/>
</dbReference>
<dbReference type="GO" id="GO:0004834">
    <property type="term" value="F:tryptophan synthase activity"/>
    <property type="evidence" value="ECO:0007669"/>
    <property type="project" value="UniProtKB-UniRule"/>
</dbReference>
<dbReference type="CDD" id="cd06446">
    <property type="entry name" value="Trp-synth_B"/>
    <property type="match status" value="1"/>
</dbReference>
<dbReference type="FunFam" id="3.40.50.1100:FF:000001">
    <property type="entry name" value="Tryptophan synthase beta chain"/>
    <property type="match status" value="1"/>
</dbReference>
<dbReference type="FunFam" id="3.40.50.1100:FF:000004">
    <property type="entry name" value="Tryptophan synthase beta chain"/>
    <property type="match status" value="1"/>
</dbReference>
<dbReference type="Gene3D" id="3.40.50.1100">
    <property type="match status" value="2"/>
</dbReference>
<dbReference type="HAMAP" id="MF_00133">
    <property type="entry name" value="Trp_synth_beta"/>
    <property type="match status" value="1"/>
</dbReference>
<dbReference type="InterPro" id="IPR006653">
    <property type="entry name" value="Trp_synth_b_CS"/>
</dbReference>
<dbReference type="InterPro" id="IPR006654">
    <property type="entry name" value="Trp_synth_beta"/>
</dbReference>
<dbReference type="InterPro" id="IPR023026">
    <property type="entry name" value="Trp_synth_beta/beta-like"/>
</dbReference>
<dbReference type="InterPro" id="IPR001926">
    <property type="entry name" value="TrpB-like_PALP"/>
</dbReference>
<dbReference type="InterPro" id="IPR036052">
    <property type="entry name" value="TrpB-like_PALP_sf"/>
</dbReference>
<dbReference type="NCBIfam" id="TIGR00263">
    <property type="entry name" value="trpB"/>
    <property type="match status" value="1"/>
</dbReference>
<dbReference type="PANTHER" id="PTHR48077:SF3">
    <property type="entry name" value="TRYPTOPHAN SYNTHASE"/>
    <property type="match status" value="1"/>
</dbReference>
<dbReference type="PANTHER" id="PTHR48077">
    <property type="entry name" value="TRYPTOPHAN SYNTHASE-RELATED"/>
    <property type="match status" value="1"/>
</dbReference>
<dbReference type="Pfam" id="PF00291">
    <property type="entry name" value="PALP"/>
    <property type="match status" value="1"/>
</dbReference>
<dbReference type="PIRSF" id="PIRSF001413">
    <property type="entry name" value="Trp_syn_beta"/>
    <property type="match status" value="1"/>
</dbReference>
<dbReference type="SUPFAM" id="SSF53686">
    <property type="entry name" value="Tryptophan synthase beta subunit-like PLP-dependent enzymes"/>
    <property type="match status" value="1"/>
</dbReference>
<dbReference type="PROSITE" id="PS00168">
    <property type="entry name" value="TRP_SYNTHASE_BETA"/>
    <property type="match status" value="1"/>
</dbReference>
<keyword id="KW-0028">Amino-acid biosynthesis</keyword>
<keyword id="KW-0057">Aromatic amino acid biosynthesis</keyword>
<keyword id="KW-0456">Lyase</keyword>
<keyword id="KW-0663">Pyridoxal phosphate</keyword>
<keyword id="KW-0822">Tryptophan biosynthesis</keyword>
<feature type="chain" id="PRO_0000098972" description="Tryptophan synthase beta chain">
    <location>
        <begin position="1"/>
        <end position="400"/>
    </location>
</feature>
<feature type="modified residue" description="N6-(pyridoxal phosphate)lysine" evidence="1">
    <location>
        <position position="92"/>
    </location>
</feature>
<proteinExistence type="inferred from homology"/>
<name>TRPB_NEIMA</name>
<accession>Q9JVC0</accession>
<accession>A1IQV2</accession>
<reference key="1">
    <citation type="journal article" date="2000" name="Nature">
        <title>Complete DNA sequence of a serogroup A strain of Neisseria meningitidis Z2491.</title>
        <authorList>
            <person name="Parkhill J."/>
            <person name="Achtman M."/>
            <person name="James K.D."/>
            <person name="Bentley S.D."/>
            <person name="Churcher C.M."/>
            <person name="Klee S.R."/>
            <person name="Morelli G."/>
            <person name="Basham D."/>
            <person name="Brown D."/>
            <person name="Chillingworth T."/>
            <person name="Davies R.M."/>
            <person name="Davis P."/>
            <person name="Devlin K."/>
            <person name="Feltwell T."/>
            <person name="Hamlin N."/>
            <person name="Holroyd S."/>
            <person name="Jagels K."/>
            <person name="Leather S."/>
            <person name="Moule S."/>
            <person name="Mungall K.L."/>
            <person name="Quail M.A."/>
            <person name="Rajandream M.A."/>
            <person name="Rutherford K.M."/>
            <person name="Simmonds M."/>
            <person name="Skelton J."/>
            <person name="Whitehead S."/>
            <person name="Spratt B.G."/>
            <person name="Barrell B.G."/>
        </authorList>
    </citation>
    <scope>NUCLEOTIDE SEQUENCE [LARGE SCALE GENOMIC DNA]</scope>
    <source>
        <strain>DSM 15465 / Z2491</strain>
    </source>
</reference>
<organism>
    <name type="scientific">Neisseria meningitidis serogroup A / serotype 4A (strain DSM 15465 / Z2491)</name>
    <dbReference type="NCBI Taxonomy" id="122587"/>
    <lineage>
        <taxon>Bacteria</taxon>
        <taxon>Pseudomonadati</taxon>
        <taxon>Pseudomonadota</taxon>
        <taxon>Betaproteobacteria</taxon>
        <taxon>Neisseriales</taxon>
        <taxon>Neisseriaceae</taxon>
        <taxon>Neisseria</taxon>
    </lineage>
</organism>
<sequence>MKNYHAPDEKGFFGEHGGLFVSETLIPALQELADAYKAAKNDPEFWEAFRHDLKHYVGRPSPVYHAARLSEHLGGAQIWLKREDLNHTGAHKVNNTIGQALLAKRMGKKRVIAETGAGQHGVASATVAARFGMTCDVYMGADDIQRQMPNVFRMKLLGANVVGVESGSRTLKDAMNEAMREWVARVDDTFYIIGTAAGPAPYPEMVRDFQCVIGNEAKAQMQEAIGRQPDVAVACVGGGSNAIGLFHPYIGEENVRLVGVEAGGLGVNTPDHAAPITSGAPIGVLHGFRSYLMQDENGQVLGTHSVSAGLDYPGIGPEHSHLHDIKRVEYTVAKDDEALEAFDLLCRFEGIIPALESSHAVAWAVKNAPKMGKDQVILVNLSGRGDKDINTVAKLKGIKL</sequence>
<evidence type="ECO:0000255" key="1">
    <source>
        <dbReference type="HAMAP-Rule" id="MF_00133"/>
    </source>
</evidence>
<comment type="function">
    <text evidence="1">The beta subunit is responsible for the synthesis of L-tryptophan from indole and L-serine.</text>
</comment>
<comment type="catalytic activity">
    <reaction evidence="1">
        <text>(1S,2R)-1-C-(indol-3-yl)glycerol 3-phosphate + L-serine = D-glyceraldehyde 3-phosphate + L-tryptophan + H2O</text>
        <dbReference type="Rhea" id="RHEA:10532"/>
        <dbReference type="ChEBI" id="CHEBI:15377"/>
        <dbReference type="ChEBI" id="CHEBI:33384"/>
        <dbReference type="ChEBI" id="CHEBI:57912"/>
        <dbReference type="ChEBI" id="CHEBI:58866"/>
        <dbReference type="ChEBI" id="CHEBI:59776"/>
        <dbReference type="EC" id="4.2.1.20"/>
    </reaction>
</comment>
<comment type="cofactor">
    <cofactor evidence="1">
        <name>pyridoxal 5'-phosphate</name>
        <dbReference type="ChEBI" id="CHEBI:597326"/>
    </cofactor>
</comment>
<comment type="pathway">
    <text evidence="1">Amino-acid biosynthesis; L-tryptophan biosynthesis; L-tryptophan from chorismate: step 5/5.</text>
</comment>
<comment type="subunit">
    <text evidence="1">Tetramer of two alpha and two beta chains.</text>
</comment>
<comment type="similarity">
    <text evidence="1">Belongs to the TrpB family.</text>
</comment>